<accession>Q7MF00</accession>
<reference key="1">
    <citation type="journal article" date="2003" name="Genome Res.">
        <title>Comparative genome analysis of Vibrio vulnificus, a marine pathogen.</title>
        <authorList>
            <person name="Chen C.-Y."/>
            <person name="Wu K.-M."/>
            <person name="Chang Y.-C."/>
            <person name="Chang C.-H."/>
            <person name="Tsai H.-C."/>
            <person name="Liao T.-L."/>
            <person name="Liu Y.-M."/>
            <person name="Chen H.-J."/>
            <person name="Shen A.B.-T."/>
            <person name="Li J.-C."/>
            <person name="Su T.-L."/>
            <person name="Shao C.-P."/>
            <person name="Lee C.-T."/>
            <person name="Hor L.-I."/>
            <person name="Tsai S.-F."/>
        </authorList>
    </citation>
    <scope>NUCLEOTIDE SEQUENCE [LARGE SCALE GENOMIC DNA]</scope>
    <source>
        <strain>YJ016</strain>
    </source>
</reference>
<keyword id="KW-0285">Flavoprotein</keyword>
<keyword id="KW-0288">FMN</keyword>
<keyword id="KW-0560">Oxidoreductase</keyword>
<comment type="function">
    <text evidence="1">Conversion of glycerol 3-phosphate to dihydroxyacetone. Uses fumarate or nitrate as electron acceptor.</text>
</comment>
<comment type="catalytic activity">
    <reaction evidence="1">
        <text>a quinone + sn-glycerol 3-phosphate = dihydroxyacetone phosphate + a quinol</text>
        <dbReference type="Rhea" id="RHEA:18977"/>
        <dbReference type="ChEBI" id="CHEBI:24646"/>
        <dbReference type="ChEBI" id="CHEBI:57597"/>
        <dbReference type="ChEBI" id="CHEBI:57642"/>
        <dbReference type="ChEBI" id="CHEBI:132124"/>
        <dbReference type="EC" id="1.1.5.3"/>
    </reaction>
</comment>
<comment type="cofactor">
    <cofactor evidence="1">
        <name>FMN</name>
        <dbReference type="ChEBI" id="CHEBI:58210"/>
    </cofactor>
</comment>
<comment type="pathway">
    <text evidence="1">Polyol metabolism; glycerol degradation via glycerol kinase pathway; glycerone phosphate from sn-glycerol 3-phosphate (anaerobic route): step 1/1.</text>
</comment>
<comment type="subunit">
    <text evidence="1">Composed of a catalytic GlpA/B dimer and of membrane bound GlpC.</text>
</comment>
<comment type="similarity">
    <text evidence="1">Belongs to the anaerobic G-3-P dehydrogenase subunit B family.</text>
</comment>
<gene>
    <name evidence="1" type="primary">glpB</name>
    <name type="ordered locus">VVA0520</name>
</gene>
<sequence>MLNYDIAVIGGGIAGYCAALNAIEAGKKTVLISQGQSALHFSSGSIDVMAKTPSGERVEAPFSAMASLPQQHPEHPYSKMSPNFVRQSLYWLVDQLKEQGLPLHCQQDESNHHRITPLGTLKATWLSQPFVYQHRQNVAFKRLLFVAVDGYRDFQPLLAKDNLKKHPDFQHCEIGEIQVTIPGCEALRRNPNELRSIDIARLLKQPQAFNSLCHQLMKHATQEDLVIMPAIMGNGDGLVLLQQLRRQTNLTLHEVPTMPPSLLGIRIEEALQKRFLKQGGVLLKGDQVLSGEWDAQGHLVSISTRNLGDIPLHANAYILASGSYFSQGLKASLDKIVEPIFGLDMVAKPHRRQWRNDQFFSASAHPFMAFGVETDAMFRPSLNGQVCQNLYCCGSVLSGYDPVFEGSGGGVAVSTALAAVQRAMGLKQAMSVEEECVL</sequence>
<organism>
    <name type="scientific">Vibrio vulnificus (strain YJ016)</name>
    <dbReference type="NCBI Taxonomy" id="196600"/>
    <lineage>
        <taxon>Bacteria</taxon>
        <taxon>Pseudomonadati</taxon>
        <taxon>Pseudomonadota</taxon>
        <taxon>Gammaproteobacteria</taxon>
        <taxon>Vibrionales</taxon>
        <taxon>Vibrionaceae</taxon>
        <taxon>Vibrio</taxon>
    </lineage>
</organism>
<dbReference type="EC" id="1.1.5.3" evidence="1"/>
<dbReference type="EMBL" id="BA000038">
    <property type="protein sequence ID" value="BAC96546.1"/>
    <property type="molecule type" value="Genomic_DNA"/>
</dbReference>
<dbReference type="RefSeq" id="WP_011151888.1">
    <property type="nucleotide sequence ID" value="NC_005140.1"/>
</dbReference>
<dbReference type="STRING" id="672.VV93_v1c35270"/>
<dbReference type="KEGG" id="vvy:VVA0520"/>
<dbReference type="PATRIC" id="fig|196600.6.peg.3720"/>
<dbReference type="eggNOG" id="COG3075">
    <property type="taxonomic scope" value="Bacteria"/>
</dbReference>
<dbReference type="HOGENOM" id="CLU_047793_0_0_6"/>
<dbReference type="UniPathway" id="UPA00618">
    <property type="reaction ID" value="UER00673"/>
</dbReference>
<dbReference type="Proteomes" id="UP000002675">
    <property type="component" value="Chromosome II"/>
</dbReference>
<dbReference type="GO" id="GO:0009331">
    <property type="term" value="C:glycerol-3-phosphate dehydrogenase (FAD) complex"/>
    <property type="evidence" value="ECO:0007669"/>
    <property type="project" value="InterPro"/>
</dbReference>
<dbReference type="GO" id="GO:0004368">
    <property type="term" value="F:glycerol-3-phosphate dehydrogenase (quinone) activity"/>
    <property type="evidence" value="ECO:0007669"/>
    <property type="project" value="UniProtKB-UniRule"/>
</dbReference>
<dbReference type="GO" id="GO:0019563">
    <property type="term" value="P:glycerol catabolic process"/>
    <property type="evidence" value="ECO:0007669"/>
    <property type="project" value="UniProtKB-UniRule"/>
</dbReference>
<dbReference type="Gene3D" id="3.50.50.60">
    <property type="entry name" value="FAD/NAD(P)-binding domain"/>
    <property type="match status" value="1"/>
</dbReference>
<dbReference type="HAMAP" id="MF_00753">
    <property type="entry name" value="Glycerol3P_GlpB"/>
    <property type="match status" value="1"/>
</dbReference>
<dbReference type="InterPro" id="IPR003953">
    <property type="entry name" value="FAD-dep_OxRdtase_2_FAD-bd"/>
</dbReference>
<dbReference type="InterPro" id="IPR036188">
    <property type="entry name" value="FAD/NAD-bd_sf"/>
</dbReference>
<dbReference type="InterPro" id="IPR009158">
    <property type="entry name" value="G3P_DH_GlpB_su"/>
</dbReference>
<dbReference type="InterPro" id="IPR051691">
    <property type="entry name" value="Metab_Enz_Cyan_OpOx_G3PDH"/>
</dbReference>
<dbReference type="NCBIfam" id="TIGR03378">
    <property type="entry name" value="glycerol3P_GlpB"/>
    <property type="match status" value="1"/>
</dbReference>
<dbReference type="NCBIfam" id="NF003719">
    <property type="entry name" value="PRK05329.1-2"/>
    <property type="match status" value="1"/>
</dbReference>
<dbReference type="NCBIfam" id="NF003720">
    <property type="entry name" value="PRK05329.1-3"/>
    <property type="match status" value="1"/>
</dbReference>
<dbReference type="PANTHER" id="PTHR42949">
    <property type="entry name" value="ANAEROBIC GLYCEROL-3-PHOSPHATE DEHYDROGENASE SUBUNIT B"/>
    <property type="match status" value="1"/>
</dbReference>
<dbReference type="PANTHER" id="PTHR42949:SF3">
    <property type="entry name" value="ANAEROBIC GLYCEROL-3-PHOSPHATE DEHYDROGENASE SUBUNIT B"/>
    <property type="match status" value="1"/>
</dbReference>
<dbReference type="Pfam" id="PF00890">
    <property type="entry name" value="FAD_binding_2"/>
    <property type="match status" value="1"/>
</dbReference>
<dbReference type="PIRSF" id="PIRSF000141">
    <property type="entry name" value="Anaerobic_G3P_dh"/>
    <property type="match status" value="1"/>
</dbReference>
<dbReference type="SUPFAM" id="SSF51905">
    <property type="entry name" value="FAD/NAD(P)-binding domain"/>
    <property type="match status" value="1"/>
</dbReference>
<name>GLPB_VIBVY</name>
<evidence type="ECO:0000255" key="1">
    <source>
        <dbReference type="HAMAP-Rule" id="MF_00753"/>
    </source>
</evidence>
<protein>
    <recommendedName>
        <fullName evidence="1">Anaerobic glycerol-3-phosphate dehydrogenase subunit B</fullName>
        <shortName evidence="1">Anaerobic G-3-P dehydrogenase subunit B</shortName>
        <shortName evidence="1">Anaerobic G3Pdhase B</shortName>
        <ecNumber evidence="1">1.1.5.3</ecNumber>
    </recommendedName>
</protein>
<feature type="chain" id="PRO_0000204570" description="Anaerobic glycerol-3-phosphate dehydrogenase subunit B">
    <location>
        <begin position="1"/>
        <end position="438"/>
    </location>
</feature>
<proteinExistence type="inferred from homology"/>